<evidence type="ECO:0000255" key="1">
    <source>
        <dbReference type="HAMAP-Rule" id="MF_00643"/>
    </source>
</evidence>
<evidence type="ECO:0000305" key="2"/>
<sequence>MTNSSSPLQAVEVRTYPIFTVRWLAVHALAIPTVFFLGAIAAMQFIRR</sequence>
<name>PSBF_PROMA</name>
<keyword id="KW-0249">Electron transport</keyword>
<keyword id="KW-0349">Heme</keyword>
<keyword id="KW-0408">Iron</keyword>
<keyword id="KW-0472">Membrane</keyword>
<keyword id="KW-0479">Metal-binding</keyword>
<keyword id="KW-0602">Photosynthesis</keyword>
<keyword id="KW-0604">Photosystem II</keyword>
<keyword id="KW-1185">Reference proteome</keyword>
<keyword id="KW-0793">Thylakoid</keyword>
<keyword id="KW-0812">Transmembrane</keyword>
<keyword id="KW-1133">Transmembrane helix</keyword>
<keyword id="KW-0813">Transport</keyword>
<feature type="chain" id="PRO_0000200469" description="Cytochrome b559 subunit beta">
    <location>
        <begin position="1"/>
        <end position="48"/>
    </location>
</feature>
<feature type="transmembrane region" description="Helical" evidence="1">
    <location>
        <begin position="23"/>
        <end position="39"/>
    </location>
</feature>
<feature type="binding site" description="axial binding residue" evidence="1">
    <location>
        <position position="27"/>
    </location>
    <ligand>
        <name>heme</name>
        <dbReference type="ChEBI" id="CHEBI:30413"/>
        <note>ligand shared with alpha subunit</note>
    </ligand>
    <ligandPart>
        <name>Fe</name>
        <dbReference type="ChEBI" id="CHEBI:18248"/>
    </ligandPart>
</feature>
<protein>
    <recommendedName>
        <fullName evidence="1">Cytochrome b559 subunit beta</fullName>
    </recommendedName>
    <alternativeName>
        <fullName evidence="1">PSII reaction center subunit VI</fullName>
    </alternativeName>
</protein>
<accession>Q7VDN9</accession>
<organism>
    <name type="scientific">Prochlorococcus marinus (strain SARG / CCMP1375 / SS120)</name>
    <dbReference type="NCBI Taxonomy" id="167539"/>
    <lineage>
        <taxon>Bacteria</taxon>
        <taxon>Bacillati</taxon>
        <taxon>Cyanobacteriota</taxon>
        <taxon>Cyanophyceae</taxon>
        <taxon>Synechococcales</taxon>
        <taxon>Prochlorococcaceae</taxon>
        <taxon>Prochlorococcus</taxon>
    </lineage>
</organism>
<dbReference type="EMBL" id="AE017126">
    <property type="protein sequence ID" value="AAP99375.1"/>
    <property type="molecule type" value="Genomic_DNA"/>
</dbReference>
<dbReference type="RefSeq" id="NP_874723.1">
    <property type="nucleotide sequence ID" value="NC_005042.1"/>
</dbReference>
<dbReference type="RefSeq" id="WP_011124484.1">
    <property type="nucleotide sequence ID" value="NC_005042.1"/>
</dbReference>
<dbReference type="STRING" id="167539.Pro_0329"/>
<dbReference type="EnsemblBacteria" id="AAP99375">
    <property type="protein sequence ID" value="AAP99375"/>
    <property type="gene ID" value="Pro_0329"/>
</dbReference>
<dbReference type="KEGG" id="pma:Pro_0329"/>
<dbReference type="PATRIC" id="fig|167539.5.peg.338"/>
<dbReference type="eggNOG" id="ENOG50332KX">
    <property type="taxonomic scope" value="Bacteria"/>
</dbReference>
<dbReference type="HOGENOM" id="CLU_211753_1_0_3"/>
<dbReference type="OrthoDB" id="532613at2"/>
<dbReference type="Proteomes" id="UP000001420">
    <property type="component" value="Chromosome"/>
</dbReference>
<dbReference type="GO" id="GO:0009539">
    <property type="term" value="C:photosystem II reaction center"/>
    <property type="evidence" value="ECO:0007669"/>
    <property type="project" value="InterPro"/>
</dbReference>
<dbReference type="GO" id="GO:0031676">
    <property type="term" value="C:plasma membrane-derived thylakoid membrane"/>
    <property type="evidence" value="ECO:0007669"/>
    <property type="project" value="UniProtKB-SubCell"/>
</dbReference>
<dbReference type="GO" id="GO:0009055">
    <property type="term" value="F:electron transfer activity"/>
    <property type="evidence" value="ECO:0007669"/>
    <property type="project" value="UniProtKB-UniRule"/>
</dbReference>
<dbReference type="GO" id="GO:0020037">
    <property type="term" value="F:heme binding"/>
    <property type="evidence" value="ECO:0007669"/>
    <property type="project" value="InterPro"/>
</dbReference>
<dbReference type="GO" id="GO:0005506">
    <property type="term" value="F:iron ion binding"/>
    <property type="evidence" value="ECO:0007669"/>
    <property type="project" value="UniProtKB-UniRule"/>
</dbReference>
<dbReference type="GO" id="GO:0009767">
    <property type="term" value="P:photosynthetic electron transport chain"/>
    <property type="evidence" value="ECO:0007669"/>
    <property type="project" value="InterPro"/>
</dbReference>
<dbReference type="HAMAP" id="MF_00643">
    <property type="entry name" value="PSII_PsbF"/>
    <property type="match status" value="1"/>
</dbReference>
<dbReference type="InterPro" id="IPR006241">
    <property type="entry name" value="PSII_cyt_b559_bsu"/>
</dbReference>
<dbReference type="InterPro" id="IPR006216">
    <property type="entry name" value="PSII_cyt_b559_CS"/>
</dbReference>
<dbReference type="InterPro" id="IPR013081">
    <property type="entry name" value="PSII_cyt_b559_N"/>
</dbReference>
<dbReference type="NCBIfam" id="TIGR01333">
    <property type="entry name" value="cyt_b559_beta"/>
    <property type="match status" value="1"/>
</dbReference>
<dbReference type="Pfam" id="PF00283">
    <property type="entry name" value="Cytochrom_B559"/>
    <property type="match status" value="1"/>
</dbReference>
<dbReference type="PIRSF" id="PIRSF000037">
    <property type="entry name" value="PsbF"/>
    <property type="match status" value="1"/>
</dbReference>
<dbReference type="SUPFAM" id="SSF161045">
    <property type="entry name" value="Cytochrome b559 subunits"/>
    <property type="match status" value="1"/>
</dbReference>
<dbReference type="PROSITE" id="PS00537">
    <property type="entry name" value="CYTOCHROME_B559"/>
    <property type="match status" value="1"/>
</dbReference>
<gene>
    <name evidence="1" type="primary">psbF</name>
    <name type="ordered locus">Pro_0329</name>
</gene>
<proteinExistence type="inferred from homology"/>
<comment type="function">
    <text evidence="1">This b-type cytochrome is tightly associated with the reaction center of photosystem II (PSII). PSII is a light-driven water:plastoquinone oxidoreductase that uses light energy to abstract electrons from H(2)O, generating O(2) and a proton gradient subsequently used for ATP formation. It consists of a core antenna complex that captures photons, and an electron transfer chain that converts photonic excitation into a charge separation.</text>
</comment>
<comment type="cofactor">
    <cofactor evidence="1">
        <name>heme b</name>
        <dbReference type="ChEBI" id="CHEBI:60344"/>
    </cofactor>
    <text evidence="1">With its partner (PsbE) binds heme. PSII binds additional chlorophylls, carotenoids and specific lipids.</text>
</comment>
<comment type="subunit">
    <text evidence="2">Heterodimer of an alpha subunit and a beta subunit. PSII is composed of 1 copy each of membrane proteins PsbA, PsbB, PsbC, PsbD, PsbE, PsbF, PsbH, PsbI, PsbJ, PsbK, PsbL, PsbM, PsbT, PsbX, PsbY, Psb30/Ycf12, peripheral proteins PsbO, CyanoQ (PsbQ), PsbU, PsbV and a large number of cofactors. It forms dimeric complexes.</text>
</comment>
<comment type="subcellular location">
    <subcellularLocation>
        <location evidence="1">Cellular thylakoid membrane</location>
        <topology evidence="1">Single-pass membrane protein</topology>
    </subcellularLocation>
</comment>
<comment type="similarity">
    <text evidence="1">Belongs to the PsbE/PsbF family.</text>
</comment>
<reference key="1">
    <citation type="journal article" date="2003" name="Proc. Natl. Acad. Sci. U.S.A.">
        <title>Genome sequence of the cyanobacterium Prochlorococcus marinus SS120, a nearly minimal oxyphototrophic genome.</title>
        <authorList>
            <person name="Dufresne A."/>
            <person name="Salanoubat M."/>
            <person name="Partensky F."/>
            <person name="Artiguenave F."/>
            <person name="Axmann I.M."/>
            <person name="Barbe V."/>
            <person name="Duprat S."/>
            <person name="Galperin M.Y."/>
            <person name="Koonin E.V."/>
            <person name="Le Gall F."/>
            <person name="Makarova K.S."/>
            <person name="Ostrowski M."/>
            <person name="Oztas S."/>
            <person name="Robert C."/>
            <person name="Rogozin I.B."/>
            <person name="Scanlan D.J."/>
            <person name="Tandeau de Marsac N."/>
            <person name="Weissenbach J."/>
            <person name="Wincker P."/>
            <person name="Wolf Y.I."/>
            <person name="Hess W.R."/>
        </authorList>
    </citation>
    <scope>NUCLEOTIDE SEQUENCE [LARGE SCALE GENOMIC DNA]</scope>
    <source>
        <strain>SARG / CCMP1375 / SS120</strain>
    </source>
</reference>